<keyword id="KW-1015">Disulfide bond</keyword>
<keyword id="KW-0872">Ion channel impairing toxin</keyword>
<keyword id="KW-0960">Knottin</keyword>
<keyword id="KW-0964">Secreted</keyword>
<keyword id="KW-0732">Signal</keyword>
<keyword id="KW-0800">Toxin</keyword>
<dbReference type="EMBL" id="GU292995">
    <property type="protein sequence ID" value="ADB56811.1"/>
    <property type="molecule type" value="mRNA"/>
</dbReference>
<dbReference type="TCDB" id="8.B.12.1.3">
    <property type="family name" value="the spider toxin (stx2) family"/>
</dbReference>
<dbReference type="ArachnoServer" id="AS001538">
    <property type="toxin name" value="U10-theraphotoxin-Hhn1b"/>
</dbReference>
<dbReference type="GO" id="GO:0005576">
    <property type="term" value="C:extracellular region"/>
    <property type="evidence" value="ECO:0007669"/>
    <property type="project" value="UniProtKB-SubCell"/>
</dbReference>
<dbReference type="GO" id="GO:0099106">
    <property type="term" value="F:ion channel regulator activity"/>
    <property type="evidence" value="ECO:0007669"/>
    <property type="project" value="UniProtKB-KW"/>
</dbReference>
<dbReference type="GO" id="GO:0090729">
    <property type="term" value="F:toxin activity"/>
    <property type="evidence" value="ECO:0007669"/>
    <property type="project" value="UniProtKB-KW"/>
</dbReference>
<proteinExistence type="evidence at transcript level"/>
<reference key="1">
    <citation type="journal article" date="2010" name="J. Proteome Res.">
        <title>Molecular diversification of peptide toxins from the tarantula Haplopelma hainanum (Ornithoctonus hainana) venom based on transcriptomic, peptidomic, and genomic analyses.</title>
        <authorList>
            <person name="Tang X."/>
            <person name="Zhang Y."/>
            <person name="Hu W."/>
            <person name="Xu D."/>
            <person name="Tao H."/>
            <person name="Yang X."/>
            <person name="Li Y."/>
            <person name="Jiang L."/>
            <person name="Liang S."/>
        </authorList>
    </citation>
    <scope>NUCLEOTIDE SEQUENCE [LARGE SCALE MRNA]</scope>
    <source>
        <tissue>Venom gland</tissue>
    </source>
</reference>
<feature type="signal peptide" evidence="2">
    <location>
        <begin position="1"/>
        <end position="20"/>
    </location>
</feature>
<feature type="propeptide" id="PRO_0000401019" evidence="1">
    <location>
        <begin position="21"/>
        <end position="56"/>
    </location>
</feature>
<feature type="peptide" id="PRO_0000401020" description="Hainantoxin-XV-2">
    <location>
        <begin position="57"/>
        <end position="117"/>
    </location>
</feature>
<feature type="region of interest" description="Disordered" evidence="3">
    <location>
        <begin position="20"/>
        <end position="55"/>
    </location>
</feature>
<feature type="compositionally biased region" description="Basic and acidic residues" evidence="3">
    <location>
        <begin position="23"/>
        <end position="55"/>
    </location>
</feature>
<feature type="disulfide bond" evidence="4">
    <location>
        <begin position="58"/>
        <end position="72"/>
    </location>
</feature>
<feature type="disulfide bond" evidence="4">
    <location>
        <begin position="65"/>
        <end position="78"/>
    </location>
</feature>
<feature type="disulfide bond" evidence="4">
    <location>
        <begin position="69"/>
        <end position="115"/>
    </location>
</feature>
<feature type="disulfide bond" evidence="4">
    <location>
        <begin position="71"/>
        <end position="91"/>
    </location>
</feature>
<comment type="function">
    <text>Putative ion channel inhibitor.</text>
</comment>
<comment type="subcellular location">
    <subcellularLocation>
        <location evidence="1">Secreted</location>
    </subcellularLocation>
</comment>
<comment type="tissue specificity">
    <text>Expressed by the venom gland.</text>
</comment>
<comment type="domain">
    <text evidence="4">The presence of a 'disulfide through disulfide knot' structurally defines this protein as a knottin.</text>
</comment>
<comment type="similarity">
    <text>Belongs to the neurotoxin 03 (Tx2) family. 02 subfamily. HNTX-XV sub-subfamily.</text>
</comment>
<accession>D2Y2B8</accession>
<name>TX32C_CYRHA</name>
<protein>
    <recommendedName>
        <fullName>Hainantoxin-XV-2</fullName>
        <shortName>HNTX-XV-2</shortName>
    </recommendedName>
</protein>
<organism>
    <name type="scientific">Cyriopagopus hainanus</name>
    <name type="common">Chinese bird spider</name>
    <name type="synonym">Haplopelma hainanum</name>
    <dbReference type="NCBI Taxonomy" id="209901"/>
    <lineage>
        <taxon>Eukaryota</taxon>
        <taxon>Metazoa</taxon>
        <taxon>Ecdysozoa</taxon>
        <taxon>Arthropoda</taxon>
        <taxon>Chelicerata</taxon>
        <taxon>Arachnida</taxon>
        <taxon>Araneae</taxon>
        <taxon>Mygalomorphae</taxon>
        <taxon>Theraphosidae</taxon>
        <taxon>Haplopelma</taxon>
    </lineage>
</organism>
<evidence type="ECO:0000250" key="1"/>
<evidence type="ECO:0000255" key="2"/>
<evidence type="ECO:0000256" key="3">
    <source>
        <dbReference type="SAM" id="MobiDB-lite"/>
    </source>
</evidence>
<evidence type="ECO:0000305" key="4"/>
<sequence length="117" mass="13017">MKLCAVIIASLLVCVAVASSSDNQKEFAQEKEMTREETQSLGEHEKDDEVTGSEERSCIEEWKTCENDCECCGMSTLCAASWVDGHQIKLCRNVGGKLKKVLHFIQKSVSKIKSCKK</sequence>